<evidence type="ECO:0000255" key="1">
    <source>
        <dbReference type="HAMAP-Rule" id="MF_00012"/>
    </source>
</evidence>
<proteinExistence type="inferred from homology"/>
<sequence>MKKQLRSSFSTQGRRMAGARALWAANGMKKEQLGKPIIAIVNSFTQFVPGHVHLHEIGQLVKKEIEKLGCFAAEFNTIAIDDGIAMGHDGMLYSLPSRDIIADSVEYMVNAHKADAMVCISNCDKITPGMLMAAMRLNIPTVFVSGGPMEAGELDGQHLDLIDAMIKSADESVSDEEVSKIENRACPTCGCCSGMFTANSMNCLNEAIGLALPGNGTIVATHANRTQLFKDAAKQIVENTYKYYRDGDESVLPRSIATREAFLNAMTLDIAMGGSTNTVLHLLAIAHEAEADFKMDDIDMLSRKSPCLCKVAPNTQKYHIQDVNRAGGIMGIMGQLAKAGLIDTSVVRIDGMTLGEAIDKYDITSPNVCEEAIKKYKSAAAGKFNLVLGSQDVYYKELDTDRAEGCIRDIEHAYSKDGGLAVLKGNIAQDGCVVKTAGVDESIWKFTGPAKVFDSQEAACNGILGGKVVSGDVVVITHEGPKGGPGMQEMLYPTSYIKSRHLGKECALITDGRFSGGTSGLSIGHISPEAAAGGNIGKIKDGDIIEINIPERTINVRLTDEELAARPMTPVTRERYVTKSLKAYASMVSSADKGAVRLID</sequence>
<accession>Q64PS6</accession>
<gene>
    <name evidence="1" type="primary">ilvD</name>
    <name type="ordered locus">BF3763</name>
</gene>
<dbReference type="EC" id="4.2.1.9" evidence="1"/>
<dbReference type="EMBL" id="AP006841">
    <property type="protein sequence ID" value="BAD50505.1"/>
    <property type="molecule type" value="Genomic_DNA"/>
</dbReference>
<dbReference type="RefSeq" id="WP_011203429.1">
    <property type="nucleotide sequence ID" value="NC_006347.1"/>
</dbReference>
<dbReference type="RefSeq" id="YP_101039.1">
    <property type="nucleotide sequence ID" value="NC_006347.1"/>
</dbReference>
<dbReference type="SMR" id="Q64PS6"/>
<dbReference type="STRING" id="295405.BF3763"/>
<dbReference type="KEGG" id="bfr:BF3763"/>
<dbReference type="PATRIC" id="fig|295405.11.peg.3611"/>
<dbReference type="HOGENOM" id="CLU_014271_4_2_10"/>
<dbReference type="OrthoDB" id="9807077at2"/>
<dbReference type="UniPathway" id="UPA00047">
    <property type="reaction ID" value="UER00057"/>
</dbReference>
<dbReference type="UniPathway" id="UPA00049">
    <property type="reaction ID" value="UER00061"/>
</dbReference>
<dbReference type="Proteomes" id="UP000002197">
    <property type="component" value="Chromosome"/>
</dbReference>
<dbReference type="GO" id="GO:0005829">
    <property type="term" value="C:cytosol"/>
    <property type="evidence" value="ECO:0007669"/>
    <property type="project" value="TreeGrafter"/>
</dbReference>
<dbReference type="GO" id="GO:0051537">
    <property type="term" value="F:2 iron, 2 sulfur cluster binding"/>
    <property type="evidence" value="ECO:0007669"/>
    <property type="project" value="UniProtKB-UniRule"/>
</dbReference>
<dbReference type="GO" id="GO:0004160">
    <property type="term" value="F:dihydroxy-acid dehydratase activity"/>
    <property type="evidence" value="ECO:0007669"/>
    <property type="project" value="UniProtKB-UniRule"/>
</dbReference>
<dbReference type="GO" id="GO:0000287">
    <property type="term" value="F:magnesium ion binding"/>
    <property type="evidence" value="ECO:0007669"/>
    <property type="project" value="UniProtKB-UniRule"/>
</dbReference>
<dbReference type="GO" id="GO:0009097">
    <property type="term" value="P:isoleucine biosynthetic process"/>
    <property type="evidence" value="ECO:0007669"/>
    <property type="project" value="UniProtKB-UniRule"/>
</dbReference>
<dbReference type="GO" id="GO:0009099">
    <property type="term" value="P:L-valine biosynthetic process"/>
    <property type="evidence" value="ECO:0007669"/>
    <property type="project" value="UniProtKB-UniRule"/>
</dbReference>
<dbReference type="FunFam" id="3.50.30.80:FF:000001">
    <property type="entry name" value="Dihydroxy-acid dehydratase"/>
    <property type="match status" value="1"/>
</dbReference>
<dbReference type="Gene3D" id="3.50.30.80">
    <property type="entry name" value="IlvD/EDD C-terminal domain-like"/>
    <property type="match status" value="1"/>
</dbReference>
<dbReference type="HAMAP" id="MF_00012">
    <property type="entry name" value="IlvD"/>
    <property type="match status" value="1"/>
</dbReference>
<dbReference type="InterPro" id="IPR042096">
    <property type="entry name" value="Dihydro-acid_dehy_C"/>
</dbReference>
<dbReference type="InterPro" id="IPR004404">
    <property type="entry name" value="DihydroxyA_deHydtase"/>
</dbReference>
<dbReference type="InterPro" id="IPR020558">
    <property type="entry name" value="DiOHA_6PGluconate_deHydtase_CS"/>
</dbReference>
<dbReference type="InterPro" id="IPR056740">
    <property type="entry name" value="ILV_EDD_C"/>
</dbReference>
<dbReference type="InterPro" id="IPR000581">
    <property type="entry name" value="ILV_EDD_N"/>
</dbReference>
<dbReference type="InterPro" id="IPR037237">
    <property type="entry name" value="IlvD/EDD_N"/>
</dbReference>
<dbReference type="NCBIfam" id="TIGR00110">
    <property type="entry name" value="ilvD"/>
    <property type="match status" value="1"/>
</dbReference>
<dbReference type="NCBIfam" id="NF009103">
    <property type="entry name" value="PRK12448.1"/>
    <property type="match status" value="1"/>
</dbReference>
<dbReference type="PANTHER" id="PTHR43661">
    <property type="entry name" value="D-XYLONATE DEHYDRATASE"/>
    <property type="match status" value="1"/>
</dbReference>
<dbReference type="PANTHER" id="PTHR43661:SF3">
    <property type="entry name" value="D-XYLONATE DEHYDRATASE YAGF-RELATED"/>
    <property type="match status" value="1"/>
</dbReference>
<dbReference type="Pfam" id="PF24877">
    <property type="entry name" value="ILV_EDD_C"/>
    <property type="match status" value="1"/>
</dbReference>
<dbReference type="Pfam" id="PF00920">
    <property type="entry name" value="ILVD_EDD_N"/>
    <property type="match status" value="1"/>
</dbReference>
<dbReference type="SUPFAM" id="SSF143975">
    <property type="entry name" value="IlvD/EDD N-terminal domain-like"/>
    <property type="match status" value="1"/>
</dbReference>
<dbReference type="SUPFAM" id="SSF52016">
    <property type="entry name" value="LeuD/IlvD-like"/>
    <property type="match status" value="1"/>
</dbReference>
<dbReference type="PROSITE" id="PS00886">
    <property type="entry name" value="ILVD_EDD_1"/>
    <property type="match status" value="1"/>
</dbReference>
<dbReference type="PROSITE" id="PS00887">
    <property type="entry name" value="ILVD_EDD_2"/>
    <property type="match status" value="1"/>
</dbReference>
<feature type="chain" id="PRO_0000225371" description="Dihydroxy-acid dehydratase">
    <location>
        <begin position="1"/>
        <end position="600"/>
    </location>
</feature>
<feature type="active site" description="Proton acceptor" evidence="1">
    <location>
        <position position="515"/>
    </location>
</feature>
<feature type="binding site" evidence="1">
    <location>
        <position position="82"/>
    </location>
    <ligand>
        <name>Mg(2+)</name>
        <dbReference type="ChEBI" id="CHEBI:18420"/>
    </ligand>
</feature>
<feature type="binding site" evidence="1">
    <location>
        <position position="123"/>
    </location>
    <ligand>
        <name>[2Fe-2S] cluster</name>
        <dbReference type="ChEBI" id="CHEBI:190135"/>
    </ligand>
</feature>
<feature type="binding site" evidence="1">
    <location>
        <position position="124"/>
    </location>
    <ligand>
        <name>Mg(2+)</name>
        <dbReference type="ChEBI" id="CHEBI:18420"/>
    </ligand>
</feature>
<feature type="binding site" description="via carbamate group" evidence="1">
    <location>
        <position position="125"/>
    </location>
    <ligand>
        <name>Mg(2+)</name>
        <dbReference type="ChEBI" id="CHEBI:18420"/>
    </ligand>
</feature>
<feature type="binding site" evidence="1">
    <location>
        <position position="192"/>
    </location>
    <ligand>
        <name>[2Fe-2S] cluster</name>
        <dbReference type="ChEBI" id="CHEBI:190135"/>
    </ligand>
</feature>
<feature type="binding site" evidence="1">
    <location>
        <position position="489"/>
    </location>
    <ligand>
        <name>Mg(2+)</name>
        <dbReference type="ChEBI" id="CHEBI:18420"/>
    </ligand>
</feature>
<feature type="modified residue" description="N6-carboxylysine" evidence="1">
    <location>
        <position position="125"/>
    </location>
</feature>
<keyword id="KW-0001">2Fe-2S</keyword>
<keyword id="KW-0028">Amino-acid biosynthesis</keyword>
<keyword id="KW-0100">Branched-chain amino acid biosynthesis</keyword>
<keyword id="KW-0408">Iron</keyword>
<keyword id="KW-0411">Iron-sulfur</keyword>
<keyword id="KW-0456">Lyase</keyword>
<keyword id="KW-0460">Magnesium</keyword>
<keyword id="KW-0479">Metal-binding</keyword>
<organism>
    <name type="scientific">Bacteroides fragilis (strain YCH46)</name>
    <dbReference type="NCBI Taxonomy" id="295405"/>
    <lineage>
        <taxon>Bacteria</taxon>
        <taxon>Pseudomonadati</taxon>
        <taxon>Bacteroidota</taxon>
        <taxon>Bacteroidia</taxon>
        <taxon>Bacteroidales</taxon>
        <taxon>Bacteroidaceae</taxon>
        <taxon>Bacteroides</taxon>
    </lineage>
</organism>
<protein>
    <recommendedName>
        <fullName evidence="1">Dihydroxy-acid dehydratase</fullName>
        <shortName evidence="1">DAD</shortName>
        <ecNumber evidence="1">4.2.1.9</ecNumber>
    </recommendedName>
</protein>
<reference key="1">
    <citation type="journal article" date="2004" name="Proc. Natl. Acad. Sci. U.S.A.">
        <title>Genomic analysis of Bacteroides fragilis reveals extensive DNA inversions regulating cell surface adaptation.</title>
        <authorList>
            <person name="Kuwahara T."/>
            <person name="Yamashita A."/>
            <person name="Hirakawa H."/>
            <person name="Nakayama H."/>
            <person name="Toh H."/>
            <person name="Okada N."/>
            <person name="Kuhara S."/>
            <person name="Hattori M."/>
            <person name="Hayashi T."/>
            <person name="Ohnishi Y."/>
        </authorList>
    </citation>
    <scope>NUCLEOTIDE SEQUENCE [LARGE SCALE GENOMIC DNA]</scope>
    <source>
        <strain>YCH46</strain>
    </source>
</reference>
<comment type="function">
    <text evidence="1">Functions in the biosynthesis of branched-chain amino acids. Catalyzes the dehydration of (2R,3R)-2,3-dihydroxy-3-methylpentanoate (2,3-dihydroxy-3-methylvalerate) into 2-oxo-3-methylpentanoate (2-oxo-3-methylvalerate) and of (2R)-2,3-dihydroxy-3-methylbutanoate (2,3-dihydroxyisovalerate) into 2-oxo-3-methylbutanoate (2-oxoisovalerate), the penultimate precursor to L-isoleucine and L-valine, respectively.</text>
</comment>
<comment type="catalytic activity">
    <reaction evidence="1">
        <text>(2R)-2,3-dihydroxy-3-methylbutanoate = 3-methyl-2-oxobutanoate + H2O</text>
        <dbReference type="Rhea" id="RHEA:24809"/>
        <dbReference type="ChEBI" id="CHEBI:11851"/>
        <dbReference type="ChEBI" id="CHEBI:15377"/>
        <dbReference type="ChEBI" id="CHEBI:49072"/>
        <dbReference type="EC" id="4.2.1.9"/>
    </reaction>
    <physiologicalReaction direction="left-to-right" evidence="1">
        <dbReference type="Rhea" id="RHEA:24810"/>
    </physiologicalReaction>
</comment>
<comment type="catalytic activity">
    <reaction evidence="1">
        <text>(2R,3R)-2,3-dihydroxy-3-methylpentanoate = (S)-3-methyl-2-oxopentanoate + H2O</text>
        <dbReference type="Rhea" id="RHEA:27694"/>
        <dbReference type="ChEBI" id="CHEBI:15377"/>
        <dbReference type="ChEBI" id="CHEBI:35146"/>
        <dbReference type="ChEBI" id="CHEBI:49258"/>
        <dbReference type="EC" id="4.2.1.9"/>
    </reaction>
    <physiologicalReaction direction="left-to-right" evidence="1">
        <dbReference type="Rhea" id="RHEA:27695"/>
    </physiologicalReaction>
</comment>
<comment type="cofactor">
    <cofactor evidence="1">
        <name>[2Fe-2S] cluster</name>
        <dbReference type="ChEBI" id="CHEBI:190135"/>
    </cofactor>
    <text evidence="1">Binds 1 [2Fe-2S] cluster per subunit. This cluster acts as a Lewis acid cofactor.</text>
</comment>
<comment type="cofactor">
    <cofactor evidence="1">
        <name>Mg(2+)</name>
        <dbReference type="ChEBI" id="CHEBI:18420"/>
    </cofactor>
</comment>
<comment type="pathway">
    <text evidence="1">Amino-acid biosynthesis; L-isoleucine biosynthesis; L-isoleucine from 2-oxobutanoate: step 3/4.</text>
</comment>
<comment type="pathway">
    <text evidence="1">Amino-acid biosynthesis; L-valine biosynthesis; L-valine from pyruvate: step 3/4.</text>
</comment>
<comment type="subunit">
    <text evidence="1">Homodimer.</text>
</comment>
<comment type="similarity">
    <text evidence="1">Belongs to the IlvD/Edd family.</text>
</comment>
<name>ILVD_BACFR</name>